<reference key="1">
    <citation type="submission" date="2005-06" db="EMBL/GenBank/DDBJ databases">
        <title>DNA sequences of macaque genes expressed in brain or testis and its evolutionary implications.</title>
        <authorList>
            <consortium name="International consortium for macaque cDNA sequencing and analysis"/>
        </authorList>
    </citation>
    <scope>NUCLEOTIDE SEQUENCE [LARGE SCALE MRNA]</scope>
    <source>
        <tissue>Temporal cortex</tissue>
    </source>
</reference>
<evidence type="ECO:0000250" key="1">
    <source>
        <dbReference type="UniProtKB" id="P05631"/>
    </source>
</evidence>
<evidence type="ECO:0000250" key="2">
    <source>
        <dbReference type="UniProtKB" id="P19483"/>
    </source>
</evidence>
<evidence type="ECO:0000250" key="3">
    <source>
        <dbReference type="UniProtKB" id="P36542"/>
    </source>
</evidence>
<evidence type="ECO:0000250" key="4">
    <source>
        <dbReference type="UniProtKB" id="Q91VR2"/>
    </source>
</evidence>
<evidence type="ECO:0000305" key="5"/>
<sequence length="298" mass="33066">MFSRAGVAGLSAWTLQPQWIQVRNMATLKDITRRLKSIKNIQKITKSMKMVAAAKYARAERELKPARIYGLGSLALYEKADIKVPEDKKKHLLIGVSSDRGLCGAIHSSIAKQMKSEVATLTAAGKEVMLVGIGDKIRGILYRTHSDQFLVAFKEVGRKPPTFGDASVIALELLNSGYEFDEGSVIFNRFRSVISYKTEEKPIFSLNTIASAESMSIYDDIDADVLQNYQEYNLANIIYYSLKESSTSEQSARMTAMDNASKNASEMIDKLTLTFNRTRQAVITKELIEIISGAAALD</sequence>
<feature type="transit peptide" description="Mitochondrion">
    <location>
        <begin position="1"/>
        <end position="25"/>
    </location>
</feature>
<feature type="chain" id="PRO_0000226294" description="ATP synthase F(1) complex subunit gamma, mitochondrial">
    <location>
        <begin position="26"/>
        <end position="298"/>
    </location>
</feature>
<feature type="modified residue" description="N6-acetyllysine" evidence="4">
    <location>
        <position position="39"/>
    </location>
</feature>
<feature type="modified residue" description="N6-succinyllysine" evidence="4">
    <location>
        <position position="49"/>
    </location>
</feature>
<feature type="modified residue" description="N6-acetyllysine" evidence="3">
    <location>
        <position position="55"/>
    </location>
</feature>
<feature type="modified residue" description="N6-acetyllysine; alternate" evidence="4">
    <location>
        <position position="115"/>
    </location>
</feature>
<feature type="modified residue" description="N6-succinyllysine; alternate" evidence="4">
    <location>
        <position position="115"/>
    </location>
</feature>
<feature type="modified residue" description="Phosphoserine" evidence="3">
    <location>
        <position position="146"/>
    </location>
</feature>
<feature type="modified residue" description="N6-acetyllysine; alternate" evidence="3">
    <location>
        <position position="154"/>
    </location>
</feature>
<feature type="modified residue" description="N6-succinyllysine; alternate" evidence="4">
    <location>
        <position position="154"/>
    </location>
</feature>
<feature type="modified residue" description="N6-acetyllysine" evidence="3">
    <location>
        <position position="197"/>
    </location>
</feature>
<feature type="modified residue" description="N6-succinyllysine" evidence="4">
    <location>
        <position position="270"/>
    </location>
</feature>
<accession>Q4R5B0</accession>
<organism>
    <name type="scientific">Macaca fascicularis</name>
    <name type="common">Crab-eating macaque</name>
    <name type="synonym">Cynomolgus monkey</name>
    <dbReference type="NCBI Taxonomy" id="9541"/>
    <lineage>
        <taxon>Eukaryota</taxon>
        <taxon>Metazoa</taxon>
        <taxon>Chordata</taxon>
        <taxon>Craniata</taxon>
        <taxon>Vertebrata</taxon>
        <taxon>Euteleostomi</taxon>
        <taxon>Mammalia</taxon>
        <taxon>Eutheria</taxon>
        <taxon>Euarchontoglires</taxon>
        <taxon>Primates</taxon>
        <taxon>Haplorrhini</taxon>
        <taxon>Catarrhini</taxon>
        <taxon>Cercopithecidae</taxon>
        <taxon>Cercopithecinae</taxon>
        <taxon>Macaca</taxon>
    </lineage>
</organism>
<keyword id="KW-0007">Acetylation</keyword>
<keyword id="KW-0066">ATP synthesis</keyword>
<keyword id="KW-0139">CF(1)</keyword>
<keyword id="KW-0375">Hydrogen ion transport</keyword>
<keyword id="KW-0406">Ion transport</keyword>
<keyword id="KW-0472">Membrane</keyword>
<keyword id="KW-0496">Mitochondrion</keyword>
<keyword id="KW-0999">Mitochondrion inner membrane</keyword>
<keyword id="KW-0597">Phosphoprotein</keyword>
<keyword id="KW-1185">Reference proteome</keyword>
<keyword id="KW-0809">Transit peptide</keyword>
<keyword id="KW-0813">Transport</keyword>
<gene>
    <name evidence="3" type="primary">ATP5F1C</name>
    <name type="synonym">ATP5C1</name>
    <name type="ORF">QtrA-13429</name>
</gene>
<comment type="function">
    <text evidence="2 3">Subunit gamma, of the mitochondrial membrane ATP synthase complex (F(1)F(0) ATP synthase or Complex V) that produces ATP from ADP in the presence of a proton gradient across the membrane which is generated by electron transport complexes of the respiratory chain. ATP synthase complex consist of a soluble F(1) head domain - the catalytic core - and a membrane F(1) domain - the membrane proton channel. These two domains are linked by a central stalk rotating inside the F(1) region and a stationary peripheral stalk. During catalysis, ATP synthesis in the catalytic domain of F(1) is coupled via a rotary mechanism of the central stalk subunits to proton translocation (By similarity). In vivo, can only synthesize ATP although its ATP hydrolase activity can be activated artificially in vitro (By similarity). With the central stalk subunit delta, is essential for the biogenesis of F(1) catalytic part of the ATP synthase complex namely in the formation of F1 assembly intermediate (By similarity).</text>
</comment>
<comment type="subunit">
    <text evidence="3 4">Component of the ATP synthase complex composed at least of ATP5F1A/subunit alpha, ATP5F1B/subunit beta, ATP5MC1/subunit c (homooctomer), MT-ATP6/subunit a, MT-ATP8/subunit 8, ATP5ME/subunit e, ATP5MF/subunit f, ATP5MG/subunit g, ATP5MK/subunit k, ATP5MJ/subunit j, ATP5F1C/subunit gamma, ATP5F1D/subunit delta, ATP5F1E/subunit epsilon, ATP5PF/subunit F6, ATP5PB/subunit b, ATP5PD/subunit d, ATP5PO/subunit OSCP. ATP synthase complex consists of a soluble F(1) head domain (subunits alpha(3) and beta(3)) - the catalytic core - and a membrane F(0) domain - the membrane proton channel (subunits c, a, 8, e, f, g, k and j). These two domains are linked by a central stalk (subunits gamma, delta, and epsilon) rotating inside the F1 region and a stationary peripheral stalk (subunits F6, b, d, and OSCP) (By similarity). Interacts with FLVCR2; this interaction occurs in the absence of heme and is disrupted upon heme binding (By similarity).</text>
</comment>
<comment type="subcellular location">
    <subcellularLocation>
        <location evidence="1">Mitochondrion inner membrane</location>
        <topology evidence="1">Peripheral membrane protein</topology>
        <orientation evidence="1">Matrix side</orientation>
    </subcellularLocation>
</comment>
<comment type="similarity">
    <text evidence="5">Belongs to the ATPase gamma chain family.</text>
</comment>
<proteinExistence type="evidence at transcript level"/>
<protein>
    <recommendedName>
        <fullName evidence="3">ATP synthase F(1) complex subunit gamma, mitochondrial</fullName>
    </recommendedName>
    <alternativeName>
        <fullName evidence="3">ATP synthase F1 subunit gamma</fullName>
    </alternativeName>
    <alternativeName>
        <fullName>F-ATPase gamma subunit</fullName>
    </alternativeName>
</protein>
<name>ATPG_MACFA</name>
<dbReference type="EMBL" id="AB169634">
    <property type="protein sequence ID" value="BAE01715.1"/>
    <property type="molecule type" value="mRNA"/>
</dbReference>
<dbReference type="RefSeq" id="NP_001272157.1">
    <property type="nucleotide sequence ID" value="NM_001285228.1"/>
</dbReference>
<dbReference type="SMR" id="Q4R5B0"/>
<dbReference type="STRING" id="9541.ENSMFAP00000014531"/>
<dbReference type="eggNOG" id="KOG1531">
    <property type="taxonomic scope" value="Eukaryota"/>
</dbReference>
<dbReference type="Proteomes" id="UP000233100">
    <property type="component" value="Unplaced"/>
</dbReference>
<dbReference type="GO" id="GO:0005743">
    <property type="term" value="C:mitochondrial inner membrane"/>
    <property type="evidence" value="ECO:0007669"/>
    <property type="project" value="UniProtKB-SubCell"/>
</dbReference>
<dbReference type="GO" id="GO:0045259">
    <property type="term" value="C:proton-transporting ATP synthase complex"/>
    <property type="evidence" value="ECO:0000250"/>
    <property type="project" value="UniProtKB"/>
</dbReference>
<dbReference type="GO" id="GO:0046933">
    <property type="term" value="F:proton-transporting ATP synthase activity, rotational mechanism"/>
    <property type="evidence" value="ECO:0007669"/>
    <property type="project" value="InterPro"/>
</dbReference>
<dbReference type="CDD" id="cd12151">
    <property type="entry name" value="F1-ATPase_gamma"/>
    <property type="match status" value="1"/>
</dbReference>
<dbReference type="FunFam" id="1.10.287.80:FF:000007">
    <property type="entry name" value="ATP synthase gamma chain"/>
    <property type="match status" value="1"/>
</dbReference>
<dbReference type="FunFam" id="3.40.1380.10:FF:000003">
    <property type="entry name" value="ATP synthase subunit gamma"/>
    <property type="match status" value="1"/>
</dbReference>
<dbReference type="FunFam" id="1.10.287.80:FF:000013">
    <property type="entry name" value="ATP synthase subunit gamma, mitochondrial"/>
    <property type="match status" value="1"/>
</dbReference>
<dbReference type="Gene3D" id="3.40.1380.10">
    <property type="match status" value="1"/>
</dbReference>
<dbReference type="Gene3D" id="1.10.287.80">
    <property type="entry name" value="ATP synthase, gamma subunit, helix hairpin domain"/>
    <property type="match status" value="1"/>
</dbReference>
<dbReference type="InterPro" id="IPR035968">
    <property type="entry name" value="ATP_synth_F1_ATPase_gsu"/>
</dbReference>
<dbReference type="InterPro" id="IPR000131">
    <property type="entry name" value="ATP_synth_F1_gsu"/>
</dbReference>
<dbReference type="InterPro" id="IPR023632">
    <property type="entry name" value="ATP_synth_F1_gsu_CS"/>
</dbReference>
<dbReference type="NCBIfam" id="TIGR01146">
    <property type="entry name" value="ATPsyn_F1gamma"/>
    <property type="match status" value="1"/>
</dbReference>
<dbReference type="PANTHER" id="PTHR11693">
    <property type="entry name" value="ATP SYNTHASE GAMMA CHAIN"/>
    <property type="match status" value="1"/>
</dbReference>
<dbReference type="PANTHER" id="PTHR11693:SF22">
    <property type="entry name" value="ATP SYNTHASE SUBUNIT GAMMA, MITOCHONDRIAL"/>
    <property type="match status" value="1"/>
</dbReference>
<dbReference type="Pfam" id="PF00231">
    <property type="entry name" value="ATP-synt"/>
    <property type="match status" value="1"/>
</dbReference>
<dbReference type="PIRSF" id="PIRSF039089">
    <property type="entry name" value="ATP_synthase_gamma"/>
    <property type="match status" value="1"/>
</dbReference>
<dbReference type="PRINTS" id="PR00126">
    <property type="entry name" value="ATPASEGAMMA"/>
</dbReference>
<dbReference type="SUPFAM" id="SSF52943">
    <property type="entry name" value="ATP synthase (F1-ATPase), gamma subunit"/>
    <property type="match status" value="1"/>
</dbReference>
<dbReference type="PROSITE" id="PS00153">
    <property type="entry name" value="ATPASE_GAMMA"/>
    <property type="match status" value="1"/>
</dbReference>